<comment type="function">
    <text evidence="4 5 6 7 8">Thiol-disulfide oxidoreductase catalyzing disulfide bond formation of chloroplast proteins and involved in redox regulation and photosynthetic electron transport. Required for the assembly of photosystem II (PSII) through the formation of disulfide bond in PSBO, a subunit of the PSII oxygen-evolving complex in the thylakoid lumen. Involved in the formation of disulfide bonds in the lumenal protein FKBP13. In vitro, reduces phylloquinone (vitamin K1) and menaquinone (vitamin K2) to their respective quinol. Cannot reduce phylloquinone epoxide to phylloquinone (PubMed:20626653, PubMed:21781282, PubMed:22209765, PubMed:23689258). Plays an important role in regulating the thylakoid lumen redox (PubMed:25412899).</text>
</comment>
<comment type="subunit">
    <text evidence="6 8">Interacts with the PSII subunits PSBO1 and PSBO2 (PubMed:22209765). Interacts with TL17, TL20.3, HCF164, PETJ, VDE1, EDA3, FKBP13 and FKBP20-2 (PubMed:25412899).</text>
</comment>
<comment type="subcellular location">
    <subcellularLocation>
        <location evidence="12 13">Plastid</location>
        <location evidence="12 13">Chloroplast thylakoid membrane</location>
        <topology evidence="12 13">Multi-pass membrane protein</topology>
    </subcellularLocation>
</comment>
<comment type="tissue specificity">
    <text evidence="4">Expressed in cotyledons, rosette leaves, stems, cauline leaves and flowers.</text>
</comment>
<comment type="domain">
    <text evidence="1">Cysteine residues from the thioredoxin-like domain participate in a series of disulfide-exchange reactions that regenerate the redox-active cysteine residues in the transmembrane domain.</text>
</comment>
<comment type="disruption phenotype">
    <text evidence="6 7">Severe growth defects due to a limitation in the electron flow from PSII.</text>
</comment>
<comment type="similarity">
    <text evidence="11">Belongs to the VKOR family.</text>
</comment>
<comment type="sequence caution" evidence="11">
    <conflict type="erroneous initiation">
        <sequence resource="EMBL-CDS" id="AAM65737"/>
    </conflict>
    <text>Truncated N-terminus.</text>
</comment>
<comment type="sequence caution" evidence="11">
    <conflict type="erroneous gene model prediction">
        <sequence resource="EMBL-CDS" id="CAA20046"/>
    </conflict>
</comment>
<comment type="sequence caution" evidence="11">
    <conflict type="erroneous gene model prediction">
        <sequence resource="EMBL-CDS" id="CAB81485"/>
    </conflict>
</comment>
<accession>Q8L540</accession>
<accession>O81807</accession>
<accession>Q8L9V9</accession>
<organism>
    <name type="scientific">Arabidopsis thaliana</name>
    <name type="common">Mouse-ear cress</name>
    <dbReference type="NCBI Taxonomy" id="3702"/>
    <lineage>
        <taxon>Eukaryota</taxon>
        <taxon>Viridiplantae</taxon>
        <taxon>Streptophyta</taxon>
        <taxon>Embryophyta</taxon>
        <taxon>Tracheophyta</taxon>
        <taxon>Spermatophyta</taxon>
        <taxon>Magnoliopsida</taxon>
        <taxon>eudicotyledons</taxon>
        <taxon>Gunneridae</taxon>
        <taxon>Pentapetalae</taxon>
        <taxon>rosids</taxon>
        <taxon>malvids</taxon>
        <taxon>Brassicales</taxon>
        <taxon>Brassicaceae</taxon>
        <taxon>Camelineae</taxon>
        <taxon>Arabidopsis</taxon>
    </lineage>
</organism>
<gene>
    <name evidence="10" type="primary">LTO1</name>
    <name evidence="9" type="synonym">VKOR</name>
    <name evidence="14" type="ordered locus">At4g35760</name>
    <name evidence="15" type="ORF">F8D20.270</name>
</gene>
<reference key="1">
    <citation type="journal article" date="1999" name="Nature">
        <title>Sequence and analysis of chromosome 4 of the plant Arabidopsis thaliana.</title>
        <authorList>
            <person name="Mayer K.F.X."/>
            <person name="Schueller C."/>
            <person name="Wambutt R."/>
            <person name="Murphy G."/>
            <person name="Volckaert G."/>
            <person name="Pohl T."/>
            <person name="Duesterhoeft A."/>
            <person name="Stiekema W."/>
            <person name="Entian K.-D."/>
            <person name="Terryn N."/>
            <person name="Harris B."/>
            <person name="Ansorge W."/>
            <person name="Brandt P."/>
            <person name="Grivell L.A."/>
            <person name="Rieger M."/>
            <person name="Weichselgartner M."/>
            <person name="de Simone V."/>
            <person name="Obermaier B."/>
            <person name="Mache R."/>
            <person name="Mueller M."/>
            <person name="Kreis M."/>
            <person name="Delseny M."/>
            <person name="Puigdomenech P."/>
            <person name="Watson M."/>
            <person name="Schmidtheini T."/>
            <person name="Reichert B."/>
            <person name="Portetelle D."/>
            <person name="Perez-Alonso M."/>
            <person name="Boutry M."/>
            <person name="Bancroft I."/>
            <person name="Vos P."/>
            <person name="Hoheisel J."/>
            <person name="Zimmermann W."/>
            <person name="Wedler H."/>
            <person name="Ridley P."/>
            <person name="Langham S.-A."/>
            <person name="McCullagh B."/>
            <person name="Bilham L."/>
            <person name="Robben J."/>
            <person name="van der Schueren J."/>
            <person name="Grymonprez B."/>
            <person name="Chuang Y.-J."/>
            <person name="Vandenbussche F."/>
            <person name="Braeken M."/>
            <person name="Weltjens I."/>
            <person name="Voet M."/>
            <person name="Bastiaens I."/>
            <person name="Aert R."/>
            <person name="Defoor E."/>
            <person name="Weitzenegger T."/>
            <person name="Bothe G."/>
            <person name="Ramsperger U."/>
            <person name="Hilbert H."/>
            <person name="Braun M."/>
            <person name="Holzer E."/>
            <person name="Brandt A."/>
            <person name="Peters S."/>
            <person name="van Staveren M."/>
            <person name="Dirkse W."/>
            <person name="Mooijman P."/>
            <person name="Klein Lankhorst R."/>
            <person name="Rose M."/>
            <person name="Hauf J."/>
            <person name="Koetter P."/>
            <person name="Berneiser S."/>
            <person name="Hempel S."/>
            <person name="Feldpausch M."/>
            <person name="Lamberth S."/>
            <person name="Van den Daele H."/>
            <person name="De Keyser A."/>
            <person name="Buysshaert C."/>
            <person name="Gielen J."/>
            <person name="Villarroel R."/>
            <person name="De Clercq R."/>
            <person name="van Montagu M."/>
            <person name="Rogers J."/>
            <person name="Cronin A."/>
            <person name="Quail M.A."/>
            <person name="Bray-Allen S."/>
            <person name="Clark L."/>
            <person name="Doggett J."/>
            <person name="Hall S."/>
            <person name="Kay M."/>
            <person name="Lennard N."/>
            <person name="McLay K."/>
            <person name="Mayes R."/>
            <person name="Pettett A."/>
            <person name="Rajandream M.A."/>
            <person name="Lyne M."/>
            <person name="Benes V."/>
            <person name="Rechmann S."/>
            <person name="Borkova D."/>
            <person name="Bloecker H."/>
            <person name="Scharfe M."/>
            <person name="Grimm M."/>
            <person name="Loehnert T.-H."/>
            <person name="Dose S."/>
            <person name="de Haan M."/>
            <person name="Maarse A.C."/>
            <person name="Schaefer M."/>
            <person name="Mueller-Auer S."/>
            <person name="Gabel C."/>
            <person name="Fuchs M."/>
            <person name="Fartmann B."/>
            <person name="Granderath K."/>
            <person name="Dauner D."/>
            <person name="Herzl A."/>
            <person name="Neumann S."/>
            <person name="Argiriou A."/>
            <person name="Vitale D."/>
            <person name="Liguori R."/>
            <person name="Piravandi E."/>
            <person name="Massenet O."/>
            <person name="Quigley F."/>
            <person name="Clabauld G."/>
            <person name="Muendlein A."/>
            <person name="Felber R."/>
            <person name="Schnabl S."/>
            <person name="Hiller R."/>
            <person name="Schmidt W."/>
            <person name="Lecharny A."/>
            <person name="Aubourg S."/>
            <person name="Chefdor F."/>
            <person name="Cooke R."/>
            <person name="Berger C."/>
            <person name="Monfort A."/>
            <person name="Casacuberta E."/>
            <person name="Gibbons T."/>
            <person name="Weber N."/>
            <person name="Vandenbol M."/>
            <person name="Bargues M."/>
            <person name="Terol J."/>
            <person name="Torres A."/>
            <person name="Perez-Perez A."/>
            <person name="Purnelle B."/>
            <person name="Bent E."/>
            <person name="Johnson S."/>
            <person name="Tacon D."/>
            <person name="Jesse T."/>
            <person name="Heijnen L."/>
            <person name="Schwarz S."/>
            <person name="Scholler P."/>
            <person name="Heber S."/>
            <person name="Francs P."/>
            <person name="Bielke C."/>
            <person name="Frishman D."/>
            <person name="Haase D."/>
            <person name="Lemcke K."/>
            <person name="Mewes H.-W."/>
            <person name="Stocker S."/>
            <person name="Zaccaria P."/>
            <person name="Bevan M."/>
            <person name="Wilson R.K."/>
            <person name="de la Bastide M."/>
            <person name="Habermann K."/>
            <person name="Parnell L."/>
            <person name="Dedhia N."/>
            <person name="Gnoj L."/>
            <person name="Schutz K."/>
            <person name="Huang E."/>
            <person name="Spiegel L."/>
            <person name="Sekhon M."/>
            <person name="Murray J."/>
            <person name="Sheet P."/>
            <person name="Cordes M."/>
            <person name="Abu-Threideh J."/>
            <person name="Stoneking T."/>
            <person name="Kalicki J."/>
            <person name="Graves T."/>
            <person name="Harmon G."/>
            <person name="Edwards J."/>
            <person name="Latreille P."/>
            <person name="Courtney L."/>
            <person name="Cloud J."/>
            <person name="Abbott A."/>
            <person name="Scott K."/>
            <person name="Johnson D."/>
            <person name="Minx P."/>
            <person name="Bentley D."/>
            <person name="Fulton B."/>
            <person name="Miller N."/>
            <person name="Greco T."/>
            <person name="Kemp K."/>
            <person name="Kramer J."/>
            <person name="Fulton L."/>
            <person name="Mardis E."/>
            <person name="Dante M."/>
            <person name="Pepin K."/>
            <person name="Hillier L.W."/>
            <person name="Nelson J."/>
            <person name="Spieth J."/>
            <person name="Ryan E."/>
            <person name="Andrews S."/>
            <person name="Geisel C."/>
            <person name="Layman D."/>
            <person name="Du H."/>
            <person name="Ali J."/>
            <person name="Berghoff A."/>
            <person name="Jones K."/>
            <person name="Drone K."/>
            <person name="Cotton M."/>
            <person name="Joshu C."/>
            <person name="Antonoiu B."/>
            <person name="Zidanic M."/>
            <person name="Strong C."/>
            <person name="Sun H."/>
            <person name="Lamar B."/>
            <person name="Yordan C."/>
            <person name="Ma P."/>
            <person name="Zhong J."/>
            <person name="Preston R."/>
            <person name="Vil D."/>
            <person name="Shekher M."/>
            <person name="Matero A."/>
            <person name="Shah R."/>
            <person name="Swaby I.K."/>
            <person name="O'Shaughnessy A."/>
            <person name="Rodriguez M."/>
            <person name="Hoffman J."/>
            <person name="Till S."/>
            <person name="Granat S."/>
            <person name="Shohdy N."/>
            <person name="Hasegawa A."/>
            <person name="Hameed A."/>
            <person name="Lodhi M."/>
            <person name="Johnson A."/>
            <person name="Chen E."/>
            <person name="Marra M.A."/>
            <person name="Martienssen R."/>
            <person name="McCombie W.R."/>
        </authorList>
    </citation>
    <scope>NUCLEOTIDE SEQUENCE [LARGE SCALE GENOMIC DNA]</scope>
    <source>
        <strain>cv. Columbia</strain>
    </source>
</reference>
<reference key="2">
    <citation type="journal article" date="2017" name="Plant J.">
        <title>Araport11: a complete reannotation of the Arabidopsis thaliana reference genome.</title>
        <authorList>
            <person name="Cheng C.Y."/>
            <person name="Krishnakumar V."/>
            <person name="Chan A.P."/>
            <person name="Thibaud-Nissen F."/>
            <person name="Schobel S."/>
            <person name="Town C.D."/>
        </authorList>
    </citation>
    <scope>GENOME REANNOTATION</scope>
    <source>
        <strain>cv. Columbia</strain>
    </source>
</reference>
<reference key="3">
    <citation type="journal article" date="2003" name="Science">
        <title>Empirical analysis of transcriptional activity in the Arabidopsis genome.</title>
        <authorList>
            <person name="Yamada K."/>
            <person name="Lim J."/>
            <person name="Dale J.M."/>
            <person name="Chen H."/>
            <person name="Shinn P."/>
            <person name="Palm C.J."/>
            <person name="Southwick A.M."/>
            <person name="Wu H.C."/>
            <person name="Kim C.J."/>
            <person name="Nguyen M."/>
            <person name="Pham P.K."/>
            <person name="Cheuk R.F."/>
            <person name="Karlin-Newmann G."/>
            <person name="Liu S.X."/>
            <person name="Lam B."/>
            <person name="Sakano H."/>
            <person name="Wu T."/>
            <person name="Yu G."/>
            <person name="Miranda M."/>
            <person name="Quach H.L."/>
            <person name="Tripp M."/>
            <person name="Chang C.H."/>
            <person name="Lee J.M."/>
            <person name="Toriumi M.J."/>
            <person name="Chan M.M."/>
            <person name="Tang C.C."/>
            <person name="Onodera C.S."/>
            <person name="Deng J.M."/>
            <person name="Akiyama K."/>
            <person name="Ansari Y."/>
            <person name="Arakawa T."/>
            <person name="Banh J."/>
            <person name="Banno F."/>
            <person name="Bowser L."/>
            <person name="Brooks S.Y."/>
            <person name="Carninci P."/>
            <person name="Chao Q."/>
            <person name="Choy N."/>
            <person name="Enju A."/>
            <person name="Goldsmith A.D."/>
            <person name="Gurjal M."/>
            <person name="Hansen N.F."/>
            <person name="Hayashizaki Y."/>
            <person name="Johnson-Hopson C."/>
            <person name="Hsuan V.W."/>
            <person name="Iida K."/>
            <person name="Karnes M."/>
            <person name="Khan S."/>
            <person name="Koesema E."/>
            <person name="Ishida J."/>
            <person name="Jiang P.X."/>
            <person name="Jones T."/>
            <person name="Kawai J."/>
            <person name="Kamiya A."/>
            <person name="Meyers C."/>
            <person name="Nakajima M."/>
            <person name="Narusaka M."/>
            <person name="Seki M."/>
            <person name="Sakurai T."/>
            <person name="Satou M."/>
            <person name="Tamse R."/>
            <person name="Vaysberg M."/>
            <person name="Wallender E.K."/>
            <person name="Wong C."/>
            <person name="Yamamura Y."/>
            <person name="Yuan S."/>
            <person name="Shinozaki K."/>
            <person name="Davis R.W."/>
            <person name="Theologis A."/>
            <person name="Ecker J.R."/>
        </authorList>
    </citation>
    <scope>NUCLEOTIDE SEQUENCE [LARGE SCALE MRNA]</scope>
    <source>
        <strain>cv. Columbia</strain>
    </source>
</reference>
<reference key="4">
    <citation type="submission" date="2002-03" db="EMBL/GenBank/DDBJ databases">
        <title>Full-length cDNA from Arabidopsis thaliana.</title>
        <authorList>
            <person name="Brover V.V."/>
            <person name="Troukhan M.E."/>
            <person name="Alexandrov N.A."/>
            <person name="Lu Y.-P."/>
            <person name="Flavell R.B."/>
            <person name="Feldmann K.A."/>
        </authorList>
    </citation>
    <scope>NUCLEOTIDE SEQUENCE [LARGE SCALE MRNA]</scope>
</reference>
<reference key="5">
    <citation type="journal article" date="2010" name="Plant J.">
        <title>A bimodular oxidoreductase mediates the specific reduction of phylloquinone (vitamin K(1)) in chloroplasts.</title>
        <authorList>
            <person name="Furt F."/>
            <person name="Van Oostende C."/>
            <person name="Widhalm J.R."/>
            <person name="Dale M.A."/>
            <person name="Wertz J."/>
            <person name="Basset G.J."/>
        </authorList>
    </citation>
    <scope>FUNCTION</scope>
    <scope>SUBCELLULAR LOCATION</scope>
    <scope>TISSUE SPECIFICITY</scope>
</reference>
<reference key="6">
    <citation type="journal article" date="2011" name="Plant Cell">
        <title>Lumen Thiol Oxidoreductase1, a disulfide bond-forming catalyst, is required for the assembly of photosystem II in Arabidopsis.</title>
        <authorList>
            <person name="Karamoko M."/>
            <person name="Cline S."/>
            <person name="Redding K."/>
            <person name="Ruiz N."/>
            <person name="Hamel P.P."/>
        </authorList>
    </citation>
    <scope>FUNCTION</scope>
    <scope>INTERACTION WITH PSBO1 AND PSBO2</scope>
    <scope>TOPOLOGY</scope>
    <scope>DISRUPTION PHENOTYPE</scope>
</reference>
<reference key="7">
    <citation type="journal article" date="2011" name="FEBS J.">
        <title>A protein oxidase catalysing disulfide bond formation is localized to the chloroplast thylakoids.</title>
        <authorList>
            <person name="Feng W.K."/>
            <person name="Wang L."/>
            <person name="Lu Y."/>
            <person name="Wang X.Y."/>
        </authorList>
    </citation>
    <scope>FUNCTION</scope>
    <scope>SUBCELLULAR LOCATION</scope>
    <scope>TOPOLOGY</scope>
    <scope>MUTAGENESIS OF CYS-46; CYS-109; CYS-116; CYS-195; CYS-198; CYS-230; CYS-293; CYS-296; CYS-316 AND CYS-331</scope>
</reference>
<reference key="8">
    <citation type="journal article" date="2013" name="Plant Cell Rep.">
        <title>A chloroplast membrane protein LTO1/AtVKOR involving in redox regulation and ROS homeostasis.</title>
        <authorList>
            <person name="Lu Y."/>
            <person name="Wang H.R."/>
            <person name="Li H."/>
            <person name="Cui H.R."/>
            <person name="Feng Y.G."/>
            <person name="Wang X.Y."/>
        </authorList>
    </citation>
    <scope>FUNCTION</scope>
    <scope>DISRUPTION PHENOTYPE</scope>
</reference>
<reference key="9">
    <citation type="journal article" date="2014" name="Protein Pept. Lett.">
        <title>Identification of potential targets for thylakoid oxidoreductase AtVKOR/LTO1 in chloroplasts.</title>
        <authorList>
            <person name="Lu Y."/>
            <person name="Du J.J."/>
            <person name="Yu Z.B."/>
            <person name="Peng J.J."/>
            <person name="Xu J.N."/>
            <person name="Wang X.Y."/>
        </authorList>
    </citation>
    <scope>FUNCTION</scope>
    <scope>INTERACTION WITH TL20.3; HCF164; PETJ; VDE1; EDA3; TL17; FKBP13 AND FKBP20-2</scope>
</reference>
<proteinExistence type="evidence at protein level"/>
<feature type="transit peptide" description="Chloroplast" evidence="2">
    <location>
        <begin position="1"/>
        <end position="45"/>
    </location>
</feature>
<feature type="chain" id="PRO_0000428663" description="Thiol-disulfide oxidoreductase LTO1">
    <location>
        <begin position="46"/>
        <end position="376"/>
    </location>
</feature>
<feature type="topological domain" description="Stromal" evidence="2">
    <location>
        <begin position="46"/>
        <end position="81"/>
    </location>
</feature>
<feature type="transmembrane region" description="Helical" evidence="2">
    <location>
        <begin position="82"/>
        <end position="102"/>
    </location>
</feature>
<feature type="topological domain" description="Lumenal" evidence="2">
    <location>
        <begin position="103"/>
        <end position="125"/>
    </location>
</feature>
<feature type="transmembrane region" description="Helical" evidence="2">
    <location>
        <begin position="126"/>
        <end position="146"/>
    </location>
</feature>
<feature type="topological domain" description="Stromal" evidence="2">
    <location>
        <begin position="147"/>
        <end position="165"/>
    </location>
</feature>
<feature type="transmembrane region" description="Helical" evidence="2">
    <location>
        <begin position="166"/>
        <end position="186"/>
    </location>
</feature>
<feature type="topological domain" description="Lumenal" evidence="2">
    <location>
        <begin position="187"/>
        <end position="192"/>
    </location>
</feature>
<feature type="transmembrane region" description="Helical" evidence="2">
    <location>
        <begin position="193"/>
        <end position="213"/>
    </location>
</feature>
<feature type="topological domain" description="Stromal" evidence="2">
    <location>
        <begin position="214"/>
        <end position="223"/>
    </location>
</feature>
<feature type="transmembrane region" description="Helical" evidence="2">
    <location>
        <begin position="224"/>
        <end position="244"/>
    </location>
</feature>
<feature type="topological domain" description="Lumenal" evidence="2">
    <location>
        <begin position="245"/>
        <end position="376"/>
    </location>
</feature>
<feature type="region of interest" description="Disordered" evidence="3">
    <location>
        <begin position="44"/>
        <end position="77"/>
    </location>
</feature>
<feature type="compositionally biased region" description="Low complexity" evidence="3">
    <location>
        <begin position="57"/>
        <end position="77"/>
    </location>
</feature>
<feature type="disulfide bond" description="Redox-active" evidence="2">
    <location>
        <begin position="109"/>
        <end position="116"/>
    </location>
</feature>
<feature type="disulfide bond" description="Redox-active" evidence="1">
    <location>
        <begin position="195"/>
        <end position="198"/>
    </location>
</feature>
<feature type="disulfide bond" description="Redox-active" evidence="2">
    <location>
        <begin position="293"/>
        <end position="296"/>
    </location>
</feature>
<feature type="disulfide bond" description="Redox-active" evidence="2">
    <location>
        <begin position="316"/>
        <end position="331"/>
    </location>
</feature>
<feature type="mutagenesis site" description="No effect on catalysis of disulfide bond." evidence="5">
    <original>C</original>
    <variation>A</variation>
    <location>
        <position position="46"/>
    </location>
</feature>
<feature type="mutagenesis site" description="Loss of function in catalyzing disulfide bond." evidence="5">
    <original>C</original>
    <variation>A</variation>
    <location>
        <position position="109"/>
    </location>
</feature>
<feature type="mutagenesis site" description="Loss of function in catalyzing disulfide bond." evidence="5">
    <original>C</original>
    <variation>A</variation>
    <location>
        <position position="116"/>
    </location>
</feature>
<feature type="mutagenesis site" description="Loss of function in catalyzing disulfide bond." evidence="5">
    <original>C</original>
    <variation>A</variation>
    <location>
        <position position="195"/>
    </location>
</feature>
<feature type="mutagenesis site" description="Loss of function in catalyzing disulfide bond." evidence="5">
    <original>C</original>
    <variation>A</variation>
    <location>
        <position position="198"/>
    </location>
</feature>
<feature type="mutagenesis site" description="No effect on catalysis of disulfide bond." evidence="5">
    <original>C</original>
    <variation>A</variation>
    <location>
        <position position="230"/>
    </location>
</feature>
<feature type="mutagenesis site" description="Loss of function in catalyzing disulfide bond." evidence="5">
    <original>C</original>
    <variation>A</variation>
    <location>
        <position position="293"/>
    </location>
</feature>
<feature type="mutagenesis site" description="Loss of function in catalyzing disulfide bond." evidence="5">
    <original>C</original>
    <variation>A</variation>
    <location>
        <position position="296"/>
    </location>
</feature>
<feature type="mutagenesis site" description="Loss of function in catalyzing disulfide bond." evidence="5">
    <original>C</original>
    <variation>A</variation>
    <location>
        <position position="316"/>
    </location>
</feature>
<feature type="mutagenesis site" description="Loss of function in catalyzing disulfide bond." evidence="5">
    <original>C</original>
    <variation>A</variation>
    <location>
        <position position="331"/>
    </location>
</feature>
<keyword id="KW-0150">Chloroplast</keyword>
<keyword id="KW-1015">Disulfide bond</keyword>
<keyword id="KW-0472">Membrane</keyword>
<keyword id="KW-0560">Oxidoreductase</keyword>
<keyword id="KW-0934">Plastid</keyword>
<keyword id="KW-0874">Quinone</keyword>
<keyword id="KW-0676">Redox-active center</keyword>
<keyword id="KW-1185">Reference proteome</keyword>
<keyword id="KW-0793">Thylakoid</keyword>
<keyword id="KW-0809">Transit peptide</keyword>
<keyword id="KW-0812">Transmembrane</keyword>
<keyword id="KW-1133">Transmembrane helix</keyword>
<name>LTO1_ARATH</name>
<dbReference type="EC" id="1.17.4.-" evidence="11"/>
<dbReference type="EMBL" id="AL031135">
    <property type="protein sequence ID" value="CAA20046.1"/>
    <property type="status" value="ALT_SEQ"/>
    <property type="molecule type" value="Genomic_DNA"/>
</dbReference>
<dbReference type="EMBL" id="AL161588">
    <property type="protein sequence ID" value="CAB81485.1"/>
    <property type="status" value="ALT_SEQ"/>
    <property type="molecule type" value="Genomic_DNA"/>
</dbReference>
<dbReference type="EMBL" id="CP002687">
    <property type="protein sequence ID" value="AEE86559.1"/>
    <property type="molecule type" value="Genomic_DNA"/>
</dbReference>
<dbReference type="EMBL" id="AY099728">
    <property type="protein sequence ID" value="AAM20579.1"/>
    <property type="molecule type" value="mRNA"/>
</dbReference>
<dbReference type="EMBL" id="AY128903">
    <property type="protein sequence ID" value="AAM91303.1"/>
    <property type="molecule type" value="mRNA"/>
</dbReference>
<dbReference type="EMBL" id="AY088194">
    <property type="protein sequence ID" value="AAM65737.1"/>
    <property type="status" value="ALT_INIT"/>
    <property type="molecule type" value="mRNA"/>
</dbReference>
<dbReference type="PIR" id="T04681">
    <property type="entry name" value="T04681"/>
</dbReference>
<dbReference type="RefSeq" id="NP_567988.1">
    <property type="nucleotide sequence ID" value="NM_119742.4"/>
</dbReference>
<dbReference type="SMR" id="Q8L540"/>
<dbReference type="BioGRID" id="15011">
    <property type="interactions" value="10"/>
</dbReference>
<dbReference type="FunCoup" id="Q8L540">
    <property type="interactions" value="1235"/>
</dbReference>
<dbReference type="IntAct" id="Q8L540">
    <property type="interactions" value="1"/>
</dbReference>
<dbReference type="MINT" id="Q8L540"/>
<dbReference type="STRING" id="3702.Q8L540"/>
<dbReference type="PaxDb" id="3702-AT4G35760.1"/>
<dbReference type="ProteomicsDB" id="238805"/>
<dbReference type="EnsemblPlants" id="AT4G35760.1">
    <property type="protein sequence ID" value="AT4G35760.1"/>
    <property type="gene ID" value="AT4G35760"/>
</dbReference>
<dbReference type="GeneID" id="829729"/>
<dbReference type="Gramene" id="AT4G35760.1">
    <property type="protein sequence ID" value="AT4G35760.1"/>
    <property type="gene ID" value="AT4G35760"/>
</dbReference>
<dbReference type="KEGG" id="ath:AT4G35760"/>
<dbReference type="Araport" id="AT4G35760"/>
<dbReference type="TAIR" id="AT4G35760">
    <property type="gene designation" value="LTO1"/>
</dbReference>
<dbReference type="eggNOG" id="ENOG502QRER">
    <property type="taxonomic scope" value="Eukaryota"/>
</dbReference>
<dbReference type="HOGENOM" id="CLU_047345_1_0_1"/>
<dbReference type="InParanoid" id="Q8L540"/>
<dbReference type="OMA" id="WCPHCHE"/>
<dbReference type="PhylomeDB" id="Q8L540"/>
<dbReference type="PRO" id="PR:Q8L540"/>
<dbReference type="Proteomes" id="UP000006548">
    <property type="component" value="Chromosome 4"/>
</dbReference>
<dbReference type="ExpressionAtlas" id="Q8L540">
    <property type="expression patterns" value="baseline and differential"/>
</dbReference>
<dbReference type="GO" id="GO:0009507">
    <property type="term" value="C:chloroplast"/>
    <property type="evidence" value="ECO:0007005"/>
    <property type="project" value="TAIR"/>
</dbReference>
<dbReference type="GO" id="GO:0009535">
    <property type="term" value="C:chloroplast thylakoid membrane"/>
    <property type="evidence" value="ECO:0007669"/>
    <property type="project" value="UniProtKB-SubCell"/>
</dbReference>
<dbReference type="GO" id="GO:0009536">
    <property type="term" value="C:plastid"/>
    <property type="evidence" value="ECO:0000314"/>
    <property type="project" value="TAIR"/>
</dbReference>
<dbReference type="GO" id="GO:0003955">
    <property type="term" value="F:NAD(P)H dehydrogenase (quinone) activity"/>
    <property type="evidence" value="ECO:0000314"/>
    <property type="project" value="TAIR"/>
</dbReference>
<dbReference type="GO" id="GO:0048038">
    <property type="term" value="F:quinone binding"/>
    <property type="evidence" value="ECO:0007669"/>
    <property type="project" value="UniProtKB-KW"/>
</dbReference>
<dbReference type="GO" id="GO:0010207">
    <property type="term" value="P:photosystem II assembly"/>
    <property type="evidence" value="ECO:0000315"/>
    <property type="project" value="TAIR"/>
</dbReference>
<dbReference type="CDD" id="cd12916">
    <property type="entry name" value="VKOR_1"/>
    <property type="match status" value="1"/>
</dbReference>
<dbReference type="FunFam" id="1.20.1440.130:FF:000004">
    <property type="entry name" value="Thiol-disulfide oxidoreductase LTO1"/>
    <property type="match status" value="1"/>
</dbReference>
<dbReference type="FunFam" id="3.40.30.10:FF:000560">
    <property type="entry name" value="Thiol-disulfide oxidoreductase LTO1"/>
    <property type="match status" value="1"/>
</dbReference>
<dbReference type="Gene3D" id="3.40.30.10">
    <property type="entry name" value="Glutaredoxin"/>
    <property type="match status" value="1"/>
</dbReference>
<dbReference type="Gene3D" id="1.20.1440.130">
    <property type="entry name" value="VKOR domain"/>
    <property type="match status" value="1"/>
</dbReference>
<dbReference type="InterPro" id="IPR036249">
    <property type="entry name" value="Thioredoxin-like_sf"/>
</dbReference>
<dbReference type="InterPro" id="IPR012932">
    <property type="entry name" value="VKOR"/>
</dbReference>
<dbReference type="InterPro" id="IPR044698">
    <property type="entry name" value="VKOR/LTO1"/>
</dbReference>
<dbReference type="InterPro" id="IPR038354">
    <property type="entry name" value="VKOR_sf"/>
</dbReference>
<dbReference type="PANTHER" id="PTHR34573:SF1">
    <property type="entry name" value="VITAMIN K EPOXIDE REDUCTASE DOMAIN-CONTAINING PROTEIN"/>
    <property type="match status" value="1"/>
</dbReference>
<dbReference type="PANTHER" id="PTHR34573">
    <property type="entry name" value="VKC DOMAIN-CONTAINING PROTEIN"/>
    <property type="match status" value="1"/>
</dbReference>
<dbReference type="Pfam" id="PF07884">
    <property type="entry name" value="VKOR"/>
    <property type="match status" value="1"/>
</dbReference>
<dbReference type="SMART" id="SM00756">
    <property type="entry name" value="VKc"/>
    <property type="match status" value="1"/>
</dbReference>
<dbReference type="SUPFAM" id="SSF52833">
    <property type="entry name" value="Thioredoxin-like"/>
    <property type="match status" value="1"/>
</dbReference>
<sequence length="376" mass="40401">MMARFVSVSSCQFHFGFREVSPPSVTSYPRRFEVSDRRFPAIPIKCSSSEPENGEDSAPSLSSSSSSSTSEVSTSNSSTYNWYTGIGGIGMLDTAYLTYLKVTGSDAFCPIGGGTCGDVLNSDYAVVFGVPLPVIGFVMYGVVTALSAELGEGNLPFGISKSNGRFALFGITTAMASASAYFLYILSTKLSGSSCLYCLVSAFLSFSLFFLSVKDVKLQEIQQVVGLQICLAIIVVASLTASYSTAQPIPSRSGDIELPYFRTEISSSSSPYAIALAKHLNSIGAKMYGAFWCSHCLEQKEMFGREAAKELNYVECFPDGYKKGTKILKACADAAIEGFPTWIINDKVLSGEIELAELAEMTGFSLDQANETNQLQ</sequence>
<protein>
    <recommendedName>
        <fullName evidence="10">Thiol-disulfide oxidoreductase LTO1</fullName>
        <ecNumber evidence="11">1.17.4.-</ecNumber>
    </recommendedName>
    <alternativeName>
        <fullName evidence="10">Protein LUMEN THIOL OXIDOREDUCTASE 1</fullName>
    </alternativeName>
    <alternativeName>
        <fullName evidence="9">Vitamin K reductase</fullName>
    </alternativeName>
</protein>
<evidence type="ECO:0000250" key="1">
    <source>
        <dbReference type="UniProtKB" id="Q2JJF6"/>
    </source>
</evidence>
<evidence type="ECO:0000255" key="2"/>
<evidence type="ECO:0000256" key="3">
    <source>
        <dbReference type="SAM" id="MobiDB-lite"/>
    </source>
</evidence>
<evidence type="ECO:0000269" key="4">
    <source>
    </source>
</evidence>
<evidence type="ECO:0000269" key="5">
    <source>
    </source>
</evidence>
<evidence type="ECO:0000269" key="6">
    <source>
    </source>
</evidence>
<evidence type="ECO:0000269" key="7">
    <source>
    </source>
</evidence>
<evidence type="ECO:0000269" key="8">
    <source>
    </source>
</evidence>
<evidence type="ECO:0000303" key="9">
    <source>
    </source>
</evidence>
<evidence type="ECO:0000303" key="10">
    <source>
    </source>
</evidence>
<evidence type="ECO:0000305" key="11"/>
<evidence type="ECO:0000305" key="12">
    <source>
    </source>
</evidence>
<evidence type="ECO:0000305" key="13">
    <source>
    </source>
</evidence>
<evidence type="ECO:0000312" key="14">
    <source>
        <dbReference type="Araport" id="AT4G35760"/>
    </source>
</evidence>
<evidence type="ECO:0000312" key="15">
    <source>
        <dbReference type="EMBL" id="CAA20046.1"/>
    </source>
</evidence>